<sequence>MDNIYQRIENYLIKLFQTISETNNNNNNNNTNNNVGIKFENDLLLVNELGSIILKELVLEEEIGLVASLLFTGDHSLLKYLEKSSTISNKENVKIKVSILNLIAEFIEILQVRTDDYAIAIKNTCVLVFRKDQSHSVQAAAFGPIKKILHLMSRVLKQGSIVAESFGVSEMTQLFLLQFTCGKLTQTVRGEIIVVLGLFTEYFSSNMCDRNQQLSFIFMETLGGQLRSKSPESTLIQSCLKGLNSLLVHFSGDFIASDPKNVQLIYQYVYICLDPASSTQRFEIPRAAMKIVARHAVLLRQYLAEHSQPFYTRIEHWCNHINKLNRDIAFTAVDSFFQQISKELTSGNRSLEADQSTFKFFIRKFYSIFENNNSSRFELSIAIRGCGRFASPVKSFMGEWELKSLLNSLFKFSEKLMVVKIENIDEITLHLSSFINAFACILYELNELEFWYLDHIEQVLETYFIIFPHLFVKSRDRYFKAVNRLISSLFYHGEYLKILLSRFVKKGLLITFSKPNDSIKNLITTANTPFYQVYKDLWYNLLNPTIDTIDKDLNSTIKKENNNNNNNKNKNNNNNQTLTKEEISKSIKKLVYDEIVSSILSIIKKLDLQYQKDENDNNSNSNSNNNNNNDQDNNKISIIEYESEINQLKPVTSKDIELFLGLVEFFKLFISKYNTELFVQWIYIFGKEMISFSKKYPLISGFYKLVQIVMQICKSQKYFNELQQDDNINSVIFNNQIIDEQLQQQQDIMDIDDTDNNSNSNNKINKKLTNSLEEDKNNCFILFKKYIKEVSNFISHYKDELLSSCIELLLSLPKQLISIPLLVPIANLAFQYGISYLPLAHVGLNAIEYWNLVVPDQVHKHLDQLLPSLNDYLKISTNSSDSTSGGDIDIDSGGSMGGGGVVPPPSSSSRHRKMKFKSNSSLIDPKQLQFKTSIEDLQNRIIRLLGQLGGDNVHFLGKVSLVGEEIVNGVAWDTEPKVLIKIPFADQNNIDIYLDVILPNVVNLAEKSPNRQIKVAAGELLHSVLLMMIGNSANQSQANQISYSRLYRKIFPSLICLSTDVEQVTKQLFQPLVFQMIHWFTRNKKQESDDTMNLLNAIVDAVGNPLDGARRDFAGQCLCEFAKWSLKNTSVKQQEKNAFNFKSILKRIYSLAHHPDPYKRLGAAISFNQLYRIFREEDSLVDQFIFEILHNIFFSLRIGDDLTNTSSSKNNSNSNSNNNNNNNNNSEDGTEDSIVEIASKYSNVLAALTKVIIKRADMLNKPSNTRREHKDLSQFVQWVFQNGCSRTESIVRYESMILFTQLVTLLPNIKTPLQWVKERIKSNGIQFIVSIAEQQGGGVGGGSSNGNTSLGRIPKIEIGKHKDIEFWFRNLSTSLNIYLWFFSEGFFEPIQILTSREFKSSLLSSAFHTFTTQFSMLNFNSNLKTNQQQQQQQVSMFSSMTPKEIDQFNRLKCNVITNLFGLYILLLEKYKFEQVIDYGGVAFVQLLVKCLMDPQSVGFVNNYLEEREVELSKSSRQDIRNLMSRTFKFPPLLEIINNIIKLLIQIKPKYNDILHKELMEYILPNNSNNNNNSSSSGNNKSMFSLIDIRQLINTEGTDRLIHLIHSYQILYKYNLLDSILLENYNEQSEQGIQDLPKSSLEFSEFIFDYLFNNCENLSPSKLLISKELIQLALTIGIKPIKLLSLIINPNVQNTTTTTTTTSTTTTTTTTTTSTNNNNDNNNEFIKDIHDIFYKTLFTEINNYISNNFQLFLPLLANRIIETNQIHKVLNDVCIMKQQQQPNRGFKDIIESIVLFLNSISEWTLNSNLKLVEKENIIEFTKNLIKIDPIQFFENKHCYEFVYNIITNYLCRSNPLTFKNKVLVLLPYLLSYPKHNNFDLIKQKLNEIVVYDFPLNSKDLTVKSPIYNEYITCIERLLETFELTKNPLVIDTLLHVLKETDHTHINYINLSIERSILSTNDIEAKEIFSHCFELFLNHYDELKITLIDKFCVPLISHMKENILVQIFSQHLSSLMSIIQPLQPKYLSDSQERKSSIIEKICCFHLIEALYQSLPSAIIKEKINPFFYDKPDGKGTELTAAIMKAAHSAKSEKLTSDDKYVTRSLCTKYHGAAFSALASVIVSTQTKENFFHVFFFKENKDKNEYLWENIIDTDQVFNFQPETNFLVSYSTPQSLFANDLRYLSSQYLVDSSLSQDFIAKNFLEGDNNSTTNNNNGDDGIIMQGQSQSGDNENQISNDIEIDQVNSNPSMIAMLKIIDFYQKKFVVTPPSSILFGQQSQQPKPTVGDMPKWMFEIYQKLQQGVHPNIVIFMIKIIINRPQYFERFHELWIPILMDYVVSEGNGGNGLHYFVRDVCFILLKWPNIYKSQDGGGGTTLEKHLSKFVNHLMKNTYCTDRRILKSNLNIVKSFVERWKSLFKVDKSIILELLSTKGDFKSKSRQIKTTGLVLLSILLSNGYPAYDKEYDSNTISEFKFYQVLLDHLQDFKELYDAASEVCGMILLYLSKQQQSQQQQQQSIFPQLLKDKINSILNNNENQRAFSCLYFIGLHYPLFLQGFYGKIFNLLPQISNETRLIALNIIHWCVEDIQDLYTKLKSNNIENLIRIREGEIQVVILRILYKLVQKRDTTFGTVNQILSLLLSNNWFTSNVTNEYSRSLYYDIIIYIYNNFIEYQDQSNENSKDLVLSLLIGLSDESDSINKKLLQFWDNNSKTLSASSNQRLQQFFDIMYSPETESKWVANSCCLLFQLCNRSSDFTKLLFDKPLSECTFKEVQVDSSWQHRTLNMNPLFSSSQYGIDDATTDESNGDSMQLDEIRATQAPNFTLTQTAFSEFYPSSSQSYGGTNNNTGSSQLSSSSSSSGSQSSSQNNSSSKRKQKITNDPKLINNSELRRRFKKIDDRGADERIVKFARLQVKRNIEREAYFEKSKQARENQITMIRKYRVGELPDIQIKLQDIIKPLQLLCQRDSTIGVNVFSSLFTALYKNTPKESIRTFQCNIKKLIDSIVERCKFNSTLVSSILNISEKNLEFSPEFSKIKDISLNSNNHPMAIILCEKLILSLQNTTKASTTNQAQKLQQQQQLNQGWDSLRELYKSLKEDDIIMGLIEKQMGGDIPYTKKALEFELKGDWVNVLKVYDEATSKLESGELNQYQGNLSESETALWENGRLECFTKLCNWSALKDNFNSYYPNPNQIFKEKNCDLLLSYFFEFNLKVKENWNYLYQFIADLANTKQYQYLENKFPGELAFLEVTRSDHNKASYYVSKFYQAFKHQWSSSHPLAIESRHRILQPLQKIVEVEEFLNLTSTPIINTLKLDTLLTQWKSRFPTKLDDIMVWDDLIFYRSVLLEKIYERFSSFTSDKSSDEKVKSTLIQERAILYHKMSKGARKLGNIVVSEIYFRQAVKSYPKTKDNDLAFPLVTSLIDIYCTKARNSPSPIETLDRFVKALKFIESKKDEESIINSNENLQKYLMMHGDIFWDIYQLDKKLGSTLVIDSFKKNSLPINLTSIPINSLKDELFNSTFKCYSESIKLHQKSTNLLNTTSSSPSLSISSSSSPYSSTSSSSQPKLSNEILIEKTKTKSAHLKFANFCDNILKDKISQQTTPTQFNEEVIDLATSVIVSTLEAIKEEIPGSVDKFPRLLEILTQFEQYSVIAREFKSRVSTIPCWMFIRWISQMFPYLDLPQGPLILPILLEIAKWYPQAIYFPFKISSEQFGPLAKKISAPLEKELINPLLDTLVIEFQRLTHPEHRFKDYMEEMKSLIKATPKDLNAIAKLNNEIYDDSFNPSTVSGDYNLKFAKEHEASYLSNFGKDSTKLARMDQKKFLEIFAEMSGNMNKNMKPNSTASMKLKDFSGWLADFDRSNYQTSHQMEIPGQYDGIGKPQPETHVTISSFDTNVLVMGSLRKPKRVKIHGNDELDYPFLIKGGEDLRLDQRIQQLFGIMNEILKRDTACNKRSLNVTTYQVVPMTSKVGIIEWLNDTKPLREILEEQLAHQLKTPRSNVSISKLESTKYHNDWINSFAKYLKPNSPVGPLYQQMFIHATRDDCAKKLEKQHSKVPENLLQNGIWSLSSSPESYLFIRNSFARSLASFSVCSYVIGIGDRHLENFLISQRDGRLIGIDFGHAFGTATQFLPIPELMPFRLTRQFTSFLRPLDSVGLLNHNMTYTLTALQNQKEILLTTMDVFVKEPLLDWSKLATRLVKEQGKHPKDTKNVWFPKQKIQIAKKKLELVNPAYITLEELSGSVHSGLPYEKALSEIIKGDPKHNIRAKVNKVCSSVKEQIDCLIDQSTDPNILSRAWVGWNGAL</sequence>
<proteinExistence type="inferred from homology"/>
<organism>
    <name type="scientific">Dictyostelium discoideum</name>
    <name type="common">Social amoeba</name>
    <dbReference type="NCBI Taxonomy" id="44689"/>
    <lineage>
        <taxon>Eukaryota</taxon>
        <taxon>Amoebozoa</taxon>
        <taxon>Evosea</taxon>
        <taxon>Eumycetozoa</taxon>
        <taxon>Dictyostelia</taxon>
        <taxon>Dictyosteliales</taxon>
        <taxon>Dictyosteliaceae</taxon>
        <taxon>Dictyostelium</taxon>
    </lineage>
</organism>
<name>PRKDC_DICDI</name>
<gene>
    <name type="primary">dnapkcs</name>
    <name type="ORF">DDB_G0281167</name>
</gene>
<reference key="1">
    <citation type="journal article" date="2005" name="Nature">
        <title>The genome of the social amoeba Dictyostelium discoideum.</title>
        <authorList>
            <person name="Eichinger L."/>
            <person name="Pachebat J.A."/>
            <person name="Gloeckner G."/>
            <person name="Rajandream M.A."/>
            <person name="Sucgang R."/>
            <person name="Berriman M."/>
            <person name="Song J."/>
            <person name="Olsen R."/>
            <person name="Szafranski K."/>
            <person name="Xu Q."/>
            <person name="Tunggal B."/>
            <person name="Kummerfeld S."/>
            <person name="Madera M."/>
            <person name="Konfortov B.A."/>
            <person name="Rivero F."/>
            <person name="Bankier A.T."/>
            <person name="Lehmann R."/>
            <person name="Hamlin N."/>
            <person name="Davies R."/>
            <person name="Gaudet P."/>
            <person name="Fey P."/>
            <person name="Pilcher K."/>
            <person name="Chen G."/>
            <person name="Saunders D."/>
            <person name="Sodergren E.J."/>
            <person name="Davis P."/>
            <person name="Kerhornou A."/>
            <person name="Nie X."/>
            <person name="Hall N."/>
            <person name="Anjard C."/>
            <person name="Hemphill L."/>
            <person name="Bason N."/>
            <person name="Farbrother P."/>
            <person name="Desany B."/>
            <person name="Just E."/>
            <person name="Morio T."/>
            <person name="Rost R."/>
            <person name="Churcher C.M."/>
            <person name="Cooper J."/>
            <person name="Haydock S."/>
            <person name="van Driessche N."/>
            <person name="Cronin A."/>
            <person name="Goodhead I."/>
            <person name="Muzny D.M."/>
            <person name="Mourier T."/>
            <person name="Pain A."/>
            <person name="Lu M."/>
            <person name="Harper D."/>
            <person name="Lindsay R."/>
            <person name="Hauser H."/>
            <person name="James K.D."/>
            <person name="Quiles M."/>
            <person name="Madan Babu M."/>
            <person name="Saito T."/>
            <person name="Buchrieser C."/>
            <person name="Wardroper A."/>
            <person name="Felder M."/>
            <person name="Thangavelu M."/>
            <person name="Johnson D."/>
            <person name="Knights A."/>
            <person name="Loulseged H."/>
            <person name="Mungall K.L."/>
            <person name="Oliver K."/>
            <person name="Price C."/>
            <person name="Quail M.A."/>
            <person name="Urushihara H."/>
            <person name="Hernandez J."/>
            <person name="Rabbinowitsch E."/>
            <person name="Steffen D."/>
            <person name="Sanders M."/>
            <person name="Ma J."/>
            <person name="Kohara Y."/>
            <person name="Sharp S."/>
            <person name="Simmonds M.N."/>
            <person name="Spiegler S."/>
            <person name="Tivey A."/>
            <person name="Sugano S."/>
            <person name="White B."/>
            <person name="Walker D."/>
            <person name="Woodward J.R."/>
            <person name="Winckler T."/>
            <person name="Tanaka Y."/>
            <person name="Shaulsky G."/>
            <person name="Schleicher M."/>
            <person name="Weinstock G.M."/>
            <person name="Rosenthal A."/>
            <person name="Cox E.C."/>
            <person name="Chisholm R.L."/>
            <person name="Gibbs R.A."/>
            <person name="Loomis W.F."/>
            <person name="Platzer M."/>
            <person name="Kay R.R."/>
            <person name="Williams J.G."/>
            <person name="Dear P.H."/>
            <person name="Noegel A.A."/>
            <person name="Barrell B.G."/>
            <person name="Kuspa A."/>
        </authorList>
    </citation>
    <scope>NUCLEOTIDE SEQUENCE [LARGE SCALE GENOMIC DNA]</scope>
    <source>
        <strain>AX4</strain>
    </source>
</reference>
<reference key="2">
    <citation type="journal article" date="2006" name="PLoS Genet.">
        <title>The dictyostelium kinome -- analysis of the protein kinases from a simple model organism.</title>
        <authorList>
            <person name="Goldberg J.M."/>
            <person name="Manning G."/>
            <person name="Liu A."/>
            <person name="Fey P."/>
            <person name="Pilcher K.E."/>
            <person name="Xu Y."/>
            <person name="Smith J.L."/>
        </authorList>
    </citation>
    <scope>GENE FAMILY</scope>
    <scope>NOMENCLATURE</scope>
</reference>
<reference key="3">
    <citation type="journal article" date="2005" name="Curr. Biol.">
        <title>DNA-PKcs-dependent signaling of DNA damage in Dictyostelium discoideum.</title>
        <authorList>
            <person name="Hudson J.J.R."/>
            <person name="Hsu D.-W."/>
            <person name="Guo K."/>
            <person name="Zhukovskaya N."/>
            <person name="Liu P.-H."/>
            <person name="Williams J.G."/>
            <person name="Pears C.J."/>
            <person name="Lakin N.D."/>
        </authorList>
    </citation>
    <scope>FUNCTION</scope>
    <scope>DISRUPTION PHENOTYPE</scope>
</reference>
<evidence type="ECO:0000250" key="1"/>
<evidence type="ECO:0000250" key="2">
    <source>
        <dbReference type="UniProtKB" id="P78527"/>
    </source>
</evidence>
<evidence type="ECO:0000255" key="3"/>
<evidence type="ECO:0000255" key="4">
    <source>
        <dbReference type="PROSITE-ProRule" id="PRU00269"/>
    </source>
</evidence>
<evidence type="ECO:0000255" key="5">
    <source>
        <dbReference type="PROSITE-ProRule" id="PRU00534"/>
    </source>
</evidence>
<evidence type="ECO:0000255" key="6">
    <source>
        <dbReference type="PROSITE-ProRule" id="PRU00535"/>
    </source>
</evidence>
<evidence type="ECO:0000256" key="7">
    <source>
        <dbReference type="SAM" id="MobiDB-lite"/>
    </source>
</evidence>
<evidence type="ECO:0000269" key="8">
    <source>
    </source>
</evidence>
<evidence type="ECO:0000305" key="9"/>
<protein>
    <recommendedName>
        <fullName>DNA-dependent protein kinase catalytic subunit</fullName>
        <shortName>DNA-PK catalytic subunit</shortName>
        <shortName>DNA-PKcs</shortName>
        <ecNumber>2.7.11.1</ecNumber>
    </recommendedName>
</protein>
<feature type="chain" id="PRO_0000376002" description="DNA-dependent protein kinase catalytic subunit">
    <location>
        <begin position="1"/>
        <end position="4299"/>
    </location>
</feature>
<feature type="domain" description="FAT" evidence="5">
    <location>
        <begin position="3031"/>
        <end position="3707"/>
    </location>
</feature>
<feature type="domain" description="PI3K/PI4K catalytic" evidence="4">
    <location>
        <begin position="3887"/>
        <end position="4226"/>
    </location>
</feature>
<feature type="domain" description="FATC" evidence="5 6">
    <location>
        <begin position="4267"/>
        <end position="4299"/>
    </location>
</feature>
<feature type="region of interest" description="Disordered" evidence="7">
    <location>
        <begin position="557"/>
        <end position="577"/>
    </location>
</feature>
<feature type="region of interest" description="Disordered" evidence="7">
    <location>
        <begin position="613"/>
        <end position="633"/>
    </location>
</feature>
<feature type="region of interest" description="Disordered" evidence="7">
    <location>
        <begin position="878"/>
        <end position="917"/>
    </location>
</feature>
<feature type="region of interest" description="Disordered" evidence="7">
    <location>
        <begin position="1206"/>
        <end position="1230"/>
    </location>
</feature>
<feature type="region of interest" description="Disordered" evidence="7">
    <location>
        <begin position="2832"/>
        <end position="2881"/>
    </location>
</feature>
<feature type="region of interest" description="Disordered" evidence="7">
    <location>
        <begin position="3535"/>
        <end position="3559"/>
    </location>
</feature>
<feature type="region of interest" description="G-loop" evidence="4">
    <location>
        <begin position="3893"/>
        <end position="3899"/>
    </location>
</feature>
<feature type="region of interest" description="Catalytic loop" evidence="4">
    <location>
        <begin position="4092"/>
        <end position="4100"/>
    </location>
</feature>
<feature type="region of interest" description="Activation loop" evidence="4">
    <location>
        <begin position="4112"/>
        <end position="4137"/>
    </location>
</feature>
<feature type="coiled-coil region" evidence="3">
    <location>
        <begin position="551"/>
        <end position="590"/>
    </location>
</feature>
<feature type="compositionally biased region" description="Low complexity" evidence="7">
    <location>
        <begin position="562"/>
        <end position="575"/>
    </location>
</feature>
<feature type="compositionally biased region" description="Low complexity" evidence="7">
    <location>
        <begin position="617"/>
        <end position="631"/>
    </location>
</feature>
<feature type="compositionally biased region" description="Low complexity" evidence="7">
    <location>
        <begin position="878"/>
        <end position="893"/>
    </location>
</feature>
<feature type="compositionally biased region" description="Low complexity" evidence="7">
    <location>
        <begin position="1206"/>
        <end position="1226"/>
    </location>
</feature>
<feature type="compositionally biased region" description="Low complexity" evidence="7">
    <location>
        <begin position="2832"/>
        <end position="2867"/>
    </location>
</feature>
<feature type="modified residue" description="Phosphoserine; by autocatalysis" evidence="1">
    <location>
        <position position="2789"/>
    </location>
</feature>
<feature type="modified residue" description="Phosphothreonine; by autocatalysis" evidence="1">
    <location>
        <position position="2814"/>
    </location>
</feature>
<feature type="modified residue" description="Phosphothreonine; by autocatalysis" evidence="1">
    <location>
        <position position="2822"/>
    </location>
</feature>
<dbReference type="EC" id="2.7.11.1"/>
<dbReference type="EMBL" id="AAFI02000040">
    <property type="protein sequence ID" value="EAL66880.2"/>
    <property type="molecule type" value="Genomic_DNA"/>
</dbReference>
<dbReference type="RefSeq" id="XP_640856.2">
    <property type="nucleotide sequence ID" value="XM_635764.2"/>
</dbReference>
<dbReference type="SMR" id="Q54UC0"/>
<dbReference type="FunCoup" id="Q54UC0">
    <property type="interactions" value="381"/>
</dbReference>
<dbReference type="STRING" id="44689.Q54UC0"/>
<dbReference type="GlyGen" id="Q54UC0">
    <property type="glycosylation" value="1 site"/>
</dbReference>
<dbReference type="PaxDb" id="44689-DDB0229336"/>
<dbReference type="EnsemblProtists" id="EAL66880">
    <property type="protein sequence ID" value="EAL66880"/>
    <property type="gene ID" value="DDB_G0281167"/>
</dbReference>
<dbReference type="GeneID" id="8622912"/>
<dbReference type="KEGG" id="ddi:DDB_G0281167"/>
<dbReference type="dictyBase" id="DDB_G0281167">
    <property type="gene designation" value="dnapkcs"/>
</dbReference>
<dbReference type="VEuPathDB" id="AmoebaDB:DDB_G0281167"/>
<dbReference type="eggNOG" id="KOG0891">
    <property type="taxonomic scope" value="Eukaryota"/>
</dbReference>
<dbReference type="HOGENOM" id="CLU_224534_0_0_1"/>
<dbReference type="InParanoid" id="Q54UC0"/>
<dbReference type="OMA" id="PSPMCRE"/>
<dbReference type="PhylomeDB" id="Q54UC0"/>
<dbReference type="Reactome" id="R-DDI-5693571">
    <property type="pathway name" value="Nonhomologous End-Joining (NHEJ)"/>
</dbReference>
<dbReference type="Reactome" id="R-DDI-8866654">
    <property type="pathway name" value="E3 ubiquitin ligases ubiquitinate target proteins"/>
</dbReference>
<dbReference type="PRO" id="PR:Q54UC0"/>
<dbReference type="Proteomes" id="UP000002195">
    <property type="component" value="Chromosome 3"/>
</dbReference>
<dbReference type="GO" id="GO:0005730">
    <property type="term" value="C:nucleolus"/>
    <property type="evidence" value="ECO:0007669"/>
    <property type="project" value="UniProtKB-SubCell"/>
</dbReference>
<dbReference type="GO" id="GO:0005634">
    <property type="term" value="C:nucleus"/>
    <property type="evidence" value="ECO:0000318"/>
    <property type="project" value="GO_Central"/>
</dbReference>
<dbReference type="GO" id="GO:0005524">
    <property type="term" value="F:ATP binding"/>
    <property type="evidence" value="ECO:0007669"/>
    <property type="project" value="UniProtKB-KW"/>
</dbReference>
<dbReference type="GO" id="GO:0004677">
    <property type="term" value="F:DNA-dependent protein kinase activity"/>
    <property type="evidence" value="ECO:0007669"/>
    <property type="project" value="InterPro"/>
</dbReference>
<dbReference type="GO" id="GO:0004672">
    <property type="term" value="F:protein kinase activity"/>
    <property type="evidence" value="ECO:0000250"/>
    <property type="project" value="dictyBase"/>
</dbReference>
<dbReference type="GO" id="GO:0106310">
    <property type="term" value="F:protein serine kinase activity"/>
    <property type="evidence" value="ECO:0007669"/>
    <property type="project" value="RHEA"/>
</dbReference>
<dbReference type="GO" id="GO:0004674">
    <property type="term" value="F:protein serine/threonine kinase activity"/>
    <property type="evidence" value="ECO:0000318"/>
    <property type="project" value="GO_Central"/>
</dbReference>
<dbReference type="GO" id="GO:0006974">
    <property type="term" value="P:DNA damage response"/>
    <property type="evidence" value="ECO:0000315"/>
    <property type="project" value="dictyBase"/>
</dbReference>
<dbReference type="GO" id="GO:0006302">
    <property type="term" value="P:double-strand break repair"/>
    <property type="evidence" value="ECO:0000318"/>
    <property type="project" value="GO_Central"/>
</dbReference>
<dbReference type="GO" id="GO:0006303">
    <property type="term" value="P:double-strand break repair via nonhomologous end joining"/>
    <property type="evidence" value="ECO:0000315"/>
    <property type="project" value="dictyBase"/>
</dbReference>
<dbReference type="GO" id="GO:0072718">
    <property type="term" value="P:response to cisplatin"/>
    <property type="evidence" value="ECO:0000316"/>
    <property type="project" value="dictyBase"/>
</dbReference>
<dbReference type="GO" id="GO:0042770">
    <property type="term" value="P:signal transduction in response to DNA damage"/>
    <property type="evidence" value="ECO:0000315"/>
    <property type="project" value="dictyBase"/>
</dbReference>
<dbReference type="GO" id="GO:0000723">
    <property type="term" value="P:telomere maintenance"/>
    <property type="evidence" value="ECO:0000318"/>
    <property type="project" value="GO_Central"/>
</dbReference>
<dbReference type="CDD" id="cd05172">
    <property type="entry name" value="PIKKc_DNA-PK"/>
    <property type="match status" value="1"/>
</dbReference>
<dbReference type="FunFam" id="1.10.1070.11:FF:000041">
    <property type="entry name" value="DNA-dependent protein kinase catalytic subunit"/>
    <property type="match status" value="1"/>
</dbReference>
<dbReference type="FunFam" id="3.30.1010.10:FF:000013">
    <property type="entry name" value="Protein kinase, DNA-activated, catalytic subunit"/>
    <property type="match status" value="1"/>
</dbReference>
<dbReference type="Gene3D" id="1.10.1070.11">
    <property type="entry name" value="Phosphatidylinositol 3-/4-kinase, catalytic domain"/>
    <property type="match status" value="1"/>
</dbReference>
<dbReference type="Gene3D" id="3.30.1010.10">
    <property type="entry name" value="Phosphatidylinositol 3-kinase Catalytic Subunit, Chain A, domain 4"/>
    <property type="match status" value="1"/>
</dbReference>
<dbReference type="InterPro" id="IPR016024">
    <property type="entry name" value="ARM-type_fold"/>
</dbReference>
<dbReference type="InterPro" id="IPR050517">
    <property type="entry name" value="DDR_Repair_Kinase"/>
</dbReference>
<dbReference type="InterPro" id="IPR037706">
    <property type="entry name" value="DNA-PK_dom"/>
</dbReference>
<dbReference type="InterPro" id="IPR046804">
    <property type="entry name" value="DNA-PKcs_N"/>
</dbReference>
<dbReference type="InterPro" id="IPR046803">
    <property type="entry name" value="DNAPKcs_CC1-2"/>
</dbReference>
<dbReference type="InterPro" id="IPR012582">
    <property type="entry name" value="DNAPKcs_CC3"/>
</dbReference>
<dbReference type="InterPro" id="IPR045581">
    <property type="entry name" value="DNAPKcs_CC5"/>
</dbReference>
<dbReference type="InterPro" id="IPR003152">
    <property type="entry name" value="FATC_dom"/>
</dbReference>
<dbReference type="InterPro" id="IPR011009">
    <property type="entry name" value="Kinase-like_dom_sf"/>
</dbReference>
<dbReference type="InterPro" id="IPR000403">
    <property type="entry name" value="PI3/4_kinase_cat_dom"/>
</dbReference>
<dbReference type="InterPro" id="IPR036940">
    <property type="entry name" value="PI3/4_kinase_cat_sf"/>
</dbReference>
<dbReference type="InterPro" id="IPR018936">
    <property type="entry name" value="PI3/4_kinase_CS"/>
</dbReference>
<dbReference type="InterPro" id="IPR003151">
    <property type="entry name" value="PIK-rel_kinase_FAT"/>
</dbReference>
<dbReference type="InterPro" id="IPR014009">
    <property type="entry name" value="PIK_FAT"/>
</dbReference>
<dbReference type="PANTHER" id="PTHR11139">
    <property type="entry name" value="ATAXIA TELANGIECTASIA MUTATED ATM -RELATED"/>
    <property type="match status" value="1"/>
</dbReference>
<dbReference type="PANTHER" id="PTHR11139:SF68">
    <property type="entry name" value="DNA-DEPENDENT PROTEIN KINASE CATALYTIC SUBUNIT"/>
    <property type="match status" value="1"/>
</dbReference>
<dbReference type="Pfam" id="PF20500">
    <property type="entry name" value="DNA-PKcs_N"/>
    <property type="match status" value="1"/>
</dbReference>
<dbReference type="Pfam" id="PF20502">
    <property type="entry name" value="DNAPKcs_CC1-2"/>
    <property type="match status" value="2"/>
</dbReference>
<dbReference type="Pfam" id="PF08163">
    <property type="entry name" value="DNAPKcs_CC3"/>
    <property type="match status" value="1"/>
</dbReference>
<dbReference type="Pfam" id="PF19704">
    <property type="entry name" value="DNAPKcs_CC5"/>
    <property type="match status" value="1"/>
</dbReference>
<dbReference type="Pfam" id="PF02259">
    <property type="entry name" value="FAT"/>
    <property type="match status" value="1"/>
</dbReference>
<dbReference type="Pfam" id="PF02260">
    <property type="entry name" value="FATC"/>
    <property type="match status" value="1"/>
</dbReference>
<dbReference type="Pfam" id="PF00454">
    <property type="entry name" value="PI3_PI4_kinase"/>
    <property type="match status" value="1"/>
</dbReference>
<dbReference type="SMART" id="SM01343">
    <property type="entry name" value="FATC"/>
    <property type="match status" value="1"/>
</dbReference>
<dbReference type="SMART" id="SM01344">
    <property type="entry name" value="NUC194"/>
    <property type="match status" value="1"/>
</dbReference>
<dbReference type="SMART" id="SM00146">
    <property type="entry name" value="PI3Kc"/>
    <property type="match status" value="1"/>
</dbReference>
<dbReference type="SUPFAM" id="SSF48371">
    <property type="entry name" value="ARM repeat"/>
    <property type="match status" value="2"/>
</dbReference>
<dbReference type="SUPFAM" id="SSF56112">
    <property type="entry name" value="Protein kinase-like (PK-like)"/>
    <property type="match status" value="1"/>
</dbReference>
<dbReference type="PROSITE" id="PS00018">
    <property type="entry name" value="EF_HAND_1"/>
    <property type="match status" value="1"/>
</dbReference>
<dbReference type="PROSITE" id="PS51189">
    <property type="entry name" value="FAT"/>
    <property type="match status" value="1"/>
</dbReference>
<dbReference type="PROSITE" id="PS51190">
    <property type="entry name" value="FATC"/>
    <property type="match status" value="1"/>
</dbReference>
<dbReference type="PROSITE" id="PS00916">
    <property type="entry name" value="PI3_4_KINASE_2"/>
    <property type="match status" value="1"/>
</dbReference>
<dbReference type="PROSITE" id="PS50290">
    <property type="entry name" value="PI3_4_KINASE_3"/>
    <property type="match status" value="1"/>
</dbReference>
<comment type="function">
    <text evidence="1 8">Serine/threonine-protein kinase that acts as a molecular sensor for DNA damage. Is recruited to DNA ends by the Ku70/Ku80 heterodimer and is involved in DNA non-homologous end joining (NHEJ) required for double-strand break (DSB) repair and V(D)J recombination (By similarity). This activity is only apparent when DNA damage is administered in G1 phase of the cell cycle. Required for efficient signaling of DNA double-stranded breaks via phosphorylation of H2AX during G1.</text>
</comment>
<comment type="catalytic activity">
    <reaction>
        <text>L-seryl-[protein] + ATP = O-phospho-L-seryl-[protein] + ADP + H(+)</text>
        <dbReference type="Rhea" id="RHEA:17989"/>
        <dbReference type="Rhea" id="RHEA-COMP:9863"/>
        <dbReference type="Rhea" id="RHEA-COMP:11604"/>
        <dbReference type="ChEBI" id="CHEBI:15378"/>
        <dbReference type="ChEBI" id="CHEBI:29999"/>
        <dbReference type="ChEBI" id="CHEBI:30616"/>
        <dbReference type="ChEBI" id="CHEBI:83421"/>
        <dbReference type="ChEBI" id="CHEBI:456216"/>
        <dbReference type="EC" id="2.7.11.1"/>
    </reaction>
</comment>
<comment type="catalytic activity">
    <reaction>
        <text>L-threonyl-[protein] + ATP = O-phospho-L-threonyl-[protein] + ADP + H(+)</text>
        <dbReference type="Rhea" id="RHEA:46608"/>
        <dbReference type="Rhea" id="RHEA-COMP:11060"/>
        <dbReference type="Rhea" id="RHEA-COMP:11605"/>
        <dbReference type="ChEBI" id="CHEBI:15378"/>
        <dbReference type="ChEBI" id="CHEBI:30013"/>
        <dbReference type="ChEBI" id="CHEBI:30616"/>
        <dbReference type="ChEBI" id="CHEBI:61977"/>
        <dbReference type="ChEBI" id="CHEBI:456216"/>
        <dbReference type="EC" id="2.7.11.1"/>
    </reaction>
</comment>
<comment type="activity regulation">
    <text evidence="1">Inhibited by wortmannin. Activity of the enzyme seems to be attenuated by autophosphorylation (By similarity).</text>
</comment>
<comment type="subcellular location">
    <subcellularLocation>
        <location evidence="2">Nucleus</location>
    </subcellularLocation>
    <subcellularLocation>
        <location evidence="2">Nucleus</location>
        <location evidence="2">Nucleolus</location>
    </subcellularLocation>
</comment>
<comment type="PTM">
    <text evidence="1">May be phosphorylated upon DNA damage. Could be autophosphorylated. Autophosphorylation induces a conformational change that leads to remodeling of the DNA-PK complex, requisite for efficient end processing and DNA repair (By similarity).</text>
</comment>
<comment type="PTM">
    <text evidence="1">Autophosphorylated on Ser-2789, Thr-2814 and Thr-2822. Ser-2789 is a DNA damage-inducible phosphorylation site (inducible with ionizing radiation, IR) (By similarity).</text>
</comment>
<comment type="disruption phenotype">
    <text evidence="8">Null cells of hatched spores in G1 phase of the cell cycle exhibit a marked increase in sensitivity to bleomycin when compared to parental controls. Consistent with a lack of sensitivity of vegetative null cells to bleomycin H2AX phosphorylation is still apparent in these cells after administration of this agent during vegetative cell growth.</text>
</comment>
<comment type="similarity">
    <text evidence="9">Belongs to the PI3/PI4-kinase family. DNAPK subfamily.</text>
</comment>
<keyword id="KW-0067">ATP-binding</keyword>
<keyword id="KW-0175">Coiled coil</keyword>
<keyword id="KW-0227">DNA damage</keyword>
<keyword id="KW-0234">DNA repair</keyword>
<keyword id="KW-0418">Kinase</keyword>
<keyword id="KW-0547">Nucleotide-binding</keyword>
<keyword id="KW-0539">Nucleus</keyword>
<keyword id="KW-0597">Phosphoprotein</keyword>
<keyword id="KW-1185">Reference proteome</keyword>
<keyword id="KW-0723">Serine/threonine-protein kinase</keyword>
<keyword id="KW-0808">Transferase</keyword>
<accession>Q54UC0</accession>